<organism>
    <name type="scientific">Homo sapiens</name>
    <name type="common">Human</name>
    <dbReference type="NCBI Taxonomy" id="9606"/>
    <lineage>
        <taxon>Eukaryota</taxon>
        <taxon>Metazoa</taxon>
        <taxon>Chordata</taxon>
        <taxon>Craniata</taxon>
        <taxon>Vertebrata</taxon>
        <taxon>Euteleostomi</taxon>
        <taxon>Mammalia</taxon>
        <taxon>Eutheria</taxon>
        <taxon>Euarchontoglires</taxon>
        <taxon>Primates</taxon>
        <taxon>Haplorrhini</taxon>
        <taxon>Catarrhini</taxon>
        <taxon>Hominidae</taxon>
        <taxon>Homo</taxon>
    </lineage>
</organism>
<protein>
    <recommendedName>
        <fullName>Small proline-rich protein 2G</fullName>
        <shortName>SPR-2G</shortName>
    </recommendedName>
</protein>
<comment type="function">
    <text evidence="1">Cross-linked envelope protein of keratinocytes. It is a keratinocyte protein that first appears in the cell cytosol, but ultimately becomes cross-linked to membrane proteins by transglutaminase. All that results in the formation of an insoluble envelope beneath the plasma membrane (By similarity).</text>
</comment>
<comment type="subcellular location">
    <subcellularLocation>
        <location evidence="1">Cytoplasm</location>
    </subcellularLocation>
</comment>
<comment type="induction">
    <text evidence="1">During squamous differentiation of epidermal keratinocytes.</text>
</comment>
<comment type="similarity">
    <text evidence="3">Belongs to the cornifin (SPRR) family.</text>
</comment>
<reference key="1">
    <citation type="submission" date="2000-09" db="EMBL/GenBank/DDBJ databases">
        <title>Human cDNA related with psoriasis.</title>
        <authorList>
            <person name="Imai Y."/>
        </authorList>
    </citation>
    <scope>NUCLEOTIDE SEQUENCE [MRNA]</scope>
    <source>
        <tissue>Skin</tissue>
    </source>
</reference>
<reference key="2">
    <citation type="journal article" date="2001" name="J. Biol. Chem.">
        <title>Structural organization and regulation of the small proline-rich family of cornified envelope precursors suggest a role in adaptive barrier function.</title>
        <authorList>
            <person name="Cabral A."/>
            <person name="Voskamp P."/>
            <person name="Cleton-Jansen A.-M."/>
            <person name="South A."/>
            <person name="Nizetic D."/>
            <person name="Backendorf C."/>
        </authorList>
    </citation>
    <scope>NUCLEOTIDE SEQUENCE [GENOMIC DNA]</scope>
</reference>
<reference key="3">
    <citation type="journal article" date="2006" name="Nature">
        <title>The DNA sequence and biological annotation of human chromosome 1.</title>
        <authorList>
            <person name="Gregory S.G."/>
            <person name="Barlow K.F."/>
            <person name="McLay K.E."/>
            <person name="Kaul R."/>
            <person name="Swarbreck D."/>
            <person name="Dunham A."/>
            <person name="Scott C.E."/>
            <person name="Howe K.L."/>
            <person name="Woodfine K."/>
            <person name="Spencer C.C.A."/>
            <person name="Jones M.C."/>
            <person name="Gillson C."/>
            <person name="Searle S."/>
            <person name="Zhou Y."/>
            <person name="Kokocinski F."/>
            <person name="McDonald L."/>
            <person name="Evans R."/>
            <person name="Phillips K."/>
            <person name="Atkinson A."/>
            <person name="Cooper R."/>
            <person name="Jones C."/>
            <person name="Hall R.E."/>
            <person name="Andrews T.D."/>
            <person name="Lloyd C."/>
            <person name="Ainscough R."/>
            <person name="Almeida J.P."/>
            <person name="Ambrose K.D."/>
            <person name="Anderson F."/>
            <person name="Andrew R.W."/>
            <person name="Ashwell R.I.S."/>
            <person name="Aubin K."/>
            <person name="Babbage A.K."/>
            <person name="Bagguley C.L."/>
            <person name="Bailey J."/>
            <person name="Beasley H."/>
            <person name="Bethel G."/>
            <person name="Bird C.P."/>
            <person name="Bray-Allen S."/>
            <person name="Brown J.Y."/>
            <person name="Brown A.J."/>
            <person name="Buckley D."/>
            <person name="Burton J."/>
            <person name="Bye J."/>
            <person name="Carder C."/>
            <person name="Chapman J.C."/>
            <person name="Clark S.Y."/>
            <person name="Clarke G."/>
            <person name="Clee C."/>
            <person name="Cobley V."/>
            <person name="Collier R.E."/>
            <person name="Corby N."/>
            <person name="Coville G.J."/>
            <person name="Davies J."/>
            <person name="Deadman R."/>
            <person name="Dunn M."/>
            <person name="Earthrowl M."/>
            <person name="Ellington A.G."/>
            <person name="Errington H."/>
            <person name="Frankish A."/>
            <person name="Frankland J."/>
            <person name="French L."/>
            <person name="Garner P."/>
            <person name="Garnett J."/>
            <person name="Gay L."/>
            <person name="Ghori M.R.J."/>
            <person name="Gibson R."/>
            <person name="Gilby L.M."/>
            <person name="Gillett W."/>
            <person name="Glithero R.J."/>
            <person name="Grafham D.V."/>
            <person name="Griffiths C."/>
            <person name="Griffiths-Jones S."/>
            <person name="Grocock R."/>
            <person name="Hammond S."/>
            <person name="Harrison E.S.I."/>
            <person name="Hart E."/>
            <person name="Haugen E."/>
            <person name="Heath P.D."/>
            <person name="Holmes S."/>
            <person name="Holt K."/>
            <person name="Howden P.J."/>
            <person name="Hunt A.R."/>
            <person name="Hunt S.E."/>
            <person name="Hunter G."/>
            <person name="Isherwood J."/>
            <person name="James R."/>
            <person name="Johnson C."/>
            <person name="Johnson D."/>
            <person name="Joy A."/>
            <person name="Kay M."/>
            <person name="Kershaw J.K."/>
            <person name="Kibukawa M."/>
            <person name="Kimberley A.M."/>
            <person name="King A."/>
            <person name="Knights A.J."/>
            <person name="Lad H."/>
            <person name="Laird G."/>
            <person name="Lawlor S."/>
            <person name="Leongamornlert D.A."/>
            <person name="Lloyd D.M."/>
            <person name="Loveland J."/>
            <person name="Lovell J."/>
            <person name="Lush M.J."/>
            <person name="Lyne R."/>
            <person name="Martin S."/>
            <person name="Mashreghi-Mohammadi M."/>
            <person name="Matthews L."/>
            <person name="Matthews N.S.W."/>
            <person name="McLaren S."/>
            <person name="Milne S."/>
            <person name="Mistry S."/>
            <person name="Moore M.J.F."/>
            <person name="Nickerson T."/>
            <person name="O'Dell C.N."/>
            <person name="Oliver K."/>
            <person name="Palmeiri A."/>
            <person name="Palmer S.A."/>
            <person name="Parker A."/>
            <person name="Patel D."/>
            <person name="Pearce A.V."/>
            <person name="Peck A.I."/>
            <person name="Pelan S."/>
            <person name="Phelps K."/>
            <person name="Phillimore B.J."/>
            <person name="Plumb R."/>
            <person name="Rajan J."/>
            <person name="Raymond C."/>
            <person name="Rouse G."/>
            <person name="Saenphimmachak C."/>
            <person name="Sehra H.K."/>
            <person name="Sheridan E."/>
            <person name="Shownkeen R."/>
            <person name="Sims S."/>
            <person name="Skuce C.D."/>
            <person name="Smith M."/>
            <person name="Steward C."/>
            <person name="Subramanian S."/>
            <person name="Sycamore N."/>
            <person name="Tracey A."/>
            <person name="Tromans A."/>
            <person name="Van Helmond Z."/>
            <person name="Wall M."/>
            <person name="Wallis J.M."/>
            <person name="White S."/>
            <person name="Whitehead S.L."/>
            <person name="Wilkinson J.E."/>
            <person name="Willey D.L."/>
            <person name="Williams H."/>
            <person name="Wilming L."/>
            <person name="Wray P.W."/>
            <person name="Wu Z."/>
            <person name="Coulson A."/>
            <person name="Vaudin M."/>
            <person name="Sulston J.E."/>
            <person name="Durbin R.M."/>
            <person name="Hubbard T."/>
            <person name="Wooster R."/>
            <person name="Dunham I."/>
            <person name="Carter N.P."/>
            <person name="McVean G."/>
            <person name="Ross M.T."/>
            <person name="Harrow J."/>
            <person name="Olson M.V."/>
            <person name="Beck S."/>
            <person name="Rogers J."/>
            <person name="Bentley D.R."/>
        </authorList>
    </citation>
    <scope>NUCLEOTIDE SEQUENCE [LARGE SCALE GENOMIC DNA]</scope>
</reference>
<sequence>MSYQQQQCKQPCQPPPVCPTPKCPEPCPPPKCPEPYLPPPCPPEHCPPPPCQDKCPPVQPYPPCQQKYPPKSK</sequence>
<gene>
    <name type="primary">SPRR2G</name>
</gene>
<keyword id="KW-0963">Cytoplasm</keyword>
<keyword id="KW-0417">Keratinization</keyword>
<keyword id="KW-1267">Proteomics identification</keyword>
<keyword id="KW-1185">Reference proteome</keyword>
<keyword id="KW-0677">Repeat</keyword>
<accession>Q9BYE4</accession>
<evidence type="ECO:0000250" key="1"/>
<evidence type="ECO:0000256" key="2">
    <source>
        <dbReference type="SAM" id="MobiDB-lite"/>
    </source>
</evidence>
<evidence type="ECO:0000305" key="3"/>
<proteinExistence type="evidence at protein level"/>
<dbReference type="EMBL" id="AB048287">
    <property type="protein sequence ID" value="BAB40642.1"/>
    <property type="molecule type" value="mRNA"/>
</dbReference>
<dbReference type="EMBL" id="AF333957">
    <property type="protein sequence ID" value="AAK70944.1"/>
    <property type="molecule type" value="Genomic_DNA"/>
</dbReference>
<dbReference type="EMBL" id="AL157405">
    <property type="status" value="NOT_ANNOTATED_CDS"/>
    <property type="molecule type" value="Genomic_DNA"/>
</dbReference>
<dbReference type="CCDS" id="CCDS30868.1"/>
<dbReference type="RefSeq" id="NP_001014313.1">
    <property type="nucleotide sequence ID" value="NM_001014291.4"/>
</dbReference>
<dbReference type="RefSeq" id="XP_016857666.1">
    <property type="nucleotide sequence ID" value="XM_017002177.2"/>
</dbReference>
<dbReference type="RefSeq" id="XP_016857667.1">
    <property type="nucleotide sequence ID" value="XM_017002178.2"/>
</dbReference>
<dbReference type="RefSeq" id="XP_054194438.1">
    <property type="nucleotide sequence ID" value="XM_054338463.1"/>
</dbReference>
<dbReference type="BioGRID" id="112584">
    <property type="interactions" value="11"/>
</dbReference>
<dbReference type="FunCoup" id="Q9BYE4">
    <property type="interactions" value="33"/>
</dbReference>
<dbReference type="IntAct" id="Q9BYE4">
    <property type="interactions" value="2"/>
</dbReference>
<dbReference type="STRING" id="9606.ENSP00000357737"/>
<dbReference type="GlyGen" id="Q9BYE4">
    <property type="glycosylation" value="1 site"/>
</dbReference>
<dbReference type="BioMuta" id="SPRR2G"/>
<dbReference type="jPOST" id="Q9BYE4"/>
<dbReference type="MassIVE" id="Q9BYE4"/>
<dbReference type="PaxDb" id="9606-ENSP00000357737"/>
<dbReference type="PeptideAtlas" id="Q9BYE4"/>
<dbReference type="ProteomicsDB" id="79630"/>
<dbReference type="Pumba" id="Q9BYE4"/>
<dbReference type="Antibodypedia" id="77021">
    <property type="antibodies" value="2 antibodies from 2 providers"/>
</dbReference>
<dbReference type="DNASU" id="6706"/>
<dbReference type="Ensembl" id="ENST00000368748.5">
    <property type="protein sequence ID" value="ENSP00000357737.4"/>
    <property type="gene ID" value="ENSG00000159516.9"/>
</dbReference>
<dbReference type="GeneID" id="6706"/>
<dbReference type="KEGG" id="hsa:6706"/>
<dbReference type="MANE-Select" id="ENST00000368748.5">
    <property type="protein sequence ID" value="ENSP00000357737.4"/>
    <property type="RefSeq nucleotide sequence ID" value="NM_001014291.4"/>
    <property type="RefSeq protein sequence ID" value="NP_001014313.1"/>
</dbReference>
<dbReference type="UCSC" id="uc009wod.3">
    <property type="organism name" value="human"/>
</dbReference>
<dbReference type="AGR" id="HGNC:11267"/>
<dbReference type="CTD" id="6706"/>
<dbReference type="GeneCards" id="SPRR2G"/>
<dbReference type="HGNC" id="HGNC:11267">
    <property type="gene designation" value="SPRR2G"/>
</dbReference>
<dbReference type="HPA" id="ENSG00000159516">
    <property type="expression patterns" value="Tissue enriched (skin)"/>
</dbReference>
<dbReference type="MIM" id="617590">
    <property type="type" value="gene"/>
</dbReference>
<dbReference type="neXtProt" id="NX_Q9BYE4"/>
<dbReference type="OpenTargets" id="ENSG00000159516"/>
<dbReference type="PharmGKB" id="PA36096"/>
<dbReference type="VEuPathDB" id="HostDB:ENSG00000159516"/>
<dbReference type="eggNOG" id="ENOG502TEHF">
    <property type="taxonomic scope" value="Eukaryota"/>
</dbReference>
<dbReference type="GeneTree" id="ENSGT00730000112350"/>
<dbReference type="HOGENOM" id="CLU_192372_0_0_1"/>
<dbReference type="InParanoid" id="Q9BYE4"/>
<dbReference type="OMA" id="VCCEPCP"/>
<dbReference type="PAN-GO" id="Q9BYE4">
    <property type="GO annotations" value="0 GO annotations based on evolutionary models"/>
</dbReference>
<dbReference type="PathwayCommons" id="Q9BYE4"/>
<dbReference type="Reactome" id="R-HSA-6809371">
    <property type="pathway name" value="Formation of the cornified envelope"/>
</dbReference>
<dbReference type="SignaLink" id="Q9BYE4"/>
<dbReference type="BioGRID-ORCS" id="6706">
    <property type="hits" value="145 hits in 1128 CRISPR screens"/>
</dbReference>
<dbReference type="GenomeRNAi" id="6706"/>
<dbReference type="Pharos" id="Q9BYE4">
    <property type="development level" value="Tdark"/>
</dbReference>
<dbReference type="PRO" id="PR:Q9BYE4"/>
<dbReference type="Proteomes" id="UP000005640">
    <property type="component" value="Chromosome 1"/>
</dbReference>
<dbReference type="RNAct" id="Q9BYE4">
    <property type="molecule type" value="protein"/>
</dbReference>
<dbReference type="Bgee" id="ENSG00000159516">
    <property type="expression patterns" value="Expressed in penis and 107 other cell types or tissues"/>
</dbReference>
<dbReference type="GO" id="GO:0001533">
    <property type="term" value="C:cornified envelope"/>
    <property type="evidence" value="ECO:0000304"/>
    <property type="project" value="Reactome"/>
</dbReference>
<dbReference type="GO" id="GO:0005829">
    <property type="term" value="C:cytosol"/>
    <property type="evidence" value="ECO:0000304"/>
    <property type="project" value="Reactome"/>
</dbReference>
<dbReference type="GO" id="GO:0008544">
    <property type="term" value="P:epidermis development"/>
    <property type="evidence" value="ECO:0000303"/>
    <property type="project" value="UniProtKB"/>
</dbReference>
<dbReference type="GO" id="GO:0031424">
    <property type="term" value="P:keratinization"/>
    <property type="evidence" value="ECO:0007669"/>
    <property type="project" value="UniProtKB-KW"/>
</dbReference>
<dbReference type="GO" id="GO:0030216">
    <property type="term" value="P:keratinocyte differentiation"/>
    <property type="evidence" value="ECO:0000303"/>
    <property type="project" value="UniProtKB"/>
</dbReference>
<dbReference type="InterPro" id="IPR029142">
    <property type="entry name" value="SPRR2"/>
</dbReference>
<dbReference type="Pfam" id="PF14820">
    <property type="entry name" value="SPRR2"/>
    <property type="match status" value="1"/>
</dbReference>
<dbReference type="PRINTS" id="PR00021">
    <property type="entry name" value="PRORICH"/>
</dbReference>
<feature type="chain" id="PRO_0000150013" description="Small proline-rich protein 2G">
    <location>
        <begin position="1"/>
        <end position="73"/>
    </location>
</feature>
<feature type="repeat" description="1">
    <location>
        <begin position="21"/>
        <end position="29"/>
    </location>
</feature>
<feature type="repeat" description="2">
    <location>
        <begin position="30"/>
        <end position="38"/>
    </location>
</feature>
<feature type="repeat" description="3">
    <location>
        <begin position="39"/>
        <end position="47"/>
    </location>
</feature>
<feature type="region of interest" description="Disordered" evidence="2">
    <location>
        <begin position="1"/>
        <end position="20"/>
    </location>
</feature>
<feature type="region of interest" description="3 X 9 AA approximate tandem repeats">
    <location>
        <begin position="21"/>
        <end position="47"/>
    </location>
</feature>
<feature type="compositionally biased region" description="Low complexity" evidence="2">
    <location>
        <begin position="1"/>
        <end position="11"/>
    </location>
</feature>
<name>SPR2G_HUMAN</name>